<organism>
    <name type="scientific">Bacillus licheniformis (strain ATCC 14580 / DSM 13 / JCM 2505 / CCUG 7422 / NBRC 12200 / NCIMB 9375 / NCTC 10341 / NRRL NRS-1264 / Gibson 46)</name>
    <dbReference type="NCBI Taxonomy" id="279010"/>
    <lineage>
        <taxon>Bacteria</taxon>
        <taxon>Bacillati</taxon>
        <taxon>Bacillota</taxon>
        <taxon>Bacilli</taxon>
        <taxon>Bacillales</taxon>
        <taxon>Bacillaceae</taxon>
        <taxon>Bacillus</taxon>
    </lineage>
</organism>
<name>Y754_BACLD</name>
<accession>Q65MM5</accession>
<accession>Q62Y19</accession>
<sequence>MGRKWNNIKEKKASKDANTSRIYAKFGREIYVAAKQGEPDPELNQNLKFVLERAKTYNVPKAIIERAIEKAKGGSEENYDELRYEGFGPNGAMVIVDALTNNVNRTAADVRSTFGKNGGNMGVSGSVAYMFDPTAVIGFEGKTADETLELLMEADIDVRDILEEDDAVIVYAEPDQFHAVQEALQNAGITEFTVAELTMLAQNDVALPEDARAQFEKLIDALEDLEDVQQVYHNVDLGA</sequence>
<keyword id="KW-0963">Cytoplasm</keyword>
<keyword id="KW-0238">DNA-binding</keyword>
<keyword id="KW-1185">Reference proteome</keyword>
<keyword id="KW-0804">Transcription</keyword>
<keyword id="KW-0805">Transcription regulation</keyword>
<reference key="1">
    <citation type="journal article" date="2004" name="J. Mol. Microbiol. Biotechnol.">
        <title>The complete genome sequence of Bacillus licheniformis DSM13, an organism with great industrial potential.</title>
        <authorList>
            <person name="Veith B."/>
            <person name="Herzberg C."/>
            <person name="Steckel S."/>
            <person name="Feesche J."/>
            <person name="Maurer K.H."/>
            <person name="Ehrenreich P."/>
            <person name="Baeumer S."/>
            <person name="Henne A."/>
            <person name="Liesegang H."/>
            <person name="Merkl R."/>
            <person name="Ehrenreich A."/>
            <person name="Gottschalk G."/>
        </authorList>
    </citation>
    <scope>NUCLEOTIDE SEQUENCE [LARGE SCALE GENOMIC DNA]</scope>
    <source>
        <strain>ATCC 14580 / DSM 13 / JCM 2505 / CCUG 7422 / NBRC 12200 / NCIMB 9375 / NCTC 10341 / NRRL NRS-1264 / Gibson 46</strain>
    </source>
</reference>
<reference key="2">
    <citation type="journal article" date="2004" name="Genome Biol.">
        <title>Complete genome sequence of the industrial bacterium Bacillus licheniformis and comparisons with closely related Bacillus species.</title>
        <authorList>
            <person name="Rey M.W."/>
            <person name="Ramaiya P."/>
            <person name="Nelson B.A."/>
            <person name="Brody-Karpin S.D."/>
            <person name="Zaretsky E.J."/>
            <person name="Tang M."/>
            <person name="Lopez de Leon A."/>
            <person name="Xiang H."/>
            <person name="Gusti V."/>
            <person name="Clausen I.G."/>
            <person name="Olsen P.B."/>
            <person name="Rasmussen M.D."/>
            <person name="Andersen J.T."/>
            <person name="Joergensen P.L."/>
            <person name="Larsen T.S."/>
            <person name="Sorokin A."/>
            <person name="Bolotin A."/>
            <person name="Lapidus A."/>
            <person name="Galleron N."/>
            <person name="Ehrlich S.D."/>
            <person name="Berka R.M."/>
        </authorList>
    </citation>
    <scope>NUCLEOTIDE SEQUENCE [LARGE SCALE GENOMIC DNA]</scope>
    <source>
        <strain>ATCC 14580 / DSM 13 / JCM 2505 / CCUG 7422 / NBRC 12200 / NCIMB 9375 / NCTC 10341 / NRRL NRS-1264 / Gibson 46</strain>
    </source>
</reference>
<feature type="chain" id="PRO_0000175759" description="Probable transcriptional regulatory protein BLi00754/BL02339">
    <location>
        <begin position="1"/>
        <end position="239"/>
    </location>
</feature>
<dbReference type="EMBL" id="AE017333">
    <property type="protein sequence ID" value="AAU39689.3"/>
    <property type="status" value="ALT_INIT"/>
    <property type="molecule type" value="Genomic_DNA"/>
</dbReference>
<dbReference type="EMBL" id="CP000002">
    <property type="protein sequence ID" value="AAU22339.1"/>
    <property type="molecule type" value="Genomic_DNA"/>
</dbReference>
<dbReference type="RefSeq" id="WP_003179658.1">
    <property type="nucleotide sequence ID" value="NC_006322.1"/>
</dbReference>
<dbReference type="SMR" id="Q65MM5"/>
<dbReference type="STRING" id="279010.BL02339"/>
<dbReference type="KEGG" id="bld:BLi00754"/>
<dbReference type="KEGG" id="bli:BL02339"/>
<dbReference type="eggNOG" id="COG0217">
    <property type="taxonomic scope" value="Bacteria"/>
</dbReference>
<dbReference type="HOGENOM" id="CLU_062974_2_0_9"/>
<dbReference type="Proteomes" id="UP000000606">
    <property type="component" value="Chromosome"/>
</dbReference>
<dbReference type="GO" id="GO:0005829">
    <property type="term" value="C:cytosol"/>
    <property type="evidence" value="ECO:0007669"/>
    <property type="project" value="TreeGrafter"/>
</dbReference>
<dbReference type="GO" id="GO:0003677">
    <property type="term" value="F:DNA binding"/>
    <property type="evidence" value="ECO:0007669"/>
    <property type="project" value="UniProtKB-UniRule"/>
</dbReference>
<dbReference type="GO" id="GO:0006355">
    <property type="term" value="P:regulation of DNA-templated transcription"/>
    <property type="evidence" value="ECO:0007669"/>
    <property type="project" value="UniProtKB-UniRule"/>
</dbReference>
<dbReference type="FunFam" id="1.10.10.200:FF:000003">
    <property type="entry name" value="Probable transcriptional regulatory protein YeeN"/>
    <property type="match status" value="1"/>
</dbReference>
<dbReference type="FunFam" id="3.30.70.980:FF:000004">
    <property type="entry name" value="Probable transcriptional regulatory protein YeeN"/>
    <property type="match status" value="1"/>
</dbReference>
<dbReference type="Gene3D" id="1.10.10.200">
    <property type="match status" value="1"/>
</dbReference>
<dbReference type="Gene3D" id="3.30.70.980">
    <property type="match status" value="2"/>
</dbReference>
<dbReference type="HAMAP" id="MF_00693">
    <property type="entry name" value="Transcrip_reg_TACO1"/>
    <property type="match status" value="1"/>
</dbReference>
<dbReference type="HAMAP" id="MF_00918">
    <property type="entry name" value="Transcrip_reg_TACO1_YeeN"/>
    <property type="match status" value="1"/>
</dbReference>
<dbReference type="InterPro" id="IPR017856">
    <property type="entry name" value="Integrase-like_N"/>
</dbReference>
<dbReference type="InterPro" id="IPR048300">
    <property type="entry name" value="TACO1_YebC-like_2nd/3rd_dom"/>
</dbReference>
<dbReference type="InterPro" id="IPR049083">
    <property type="entry name" value="TACO1_YebC_N"/>
</dbReference>
<dbReference type="InterPro" id="IPR002876">
    <property type="entry name" value="Transcrip_reg_TACO1-like"/>
</dbReference>
<dbReference type="InterPro" id="IPR026564">
    <property type="entry name" value="Transcrip_reg_TACO1-like_dom3"/>
</dbReference>
<dbReference type="InterPro" id="IPR026562">
    <property type="entry name" value="Transcrip_reg_TACO1_YeeN"/>
</dbReference>
<dbReference type="InterPro" id="IPR029072">
    <property type="entry name" value="YebC-like"/>
</dbReference>
<dbReference type="NCBIfam" id="NF001030">
    <property type="entry name" value="PRK00110.1"/>
    <property type="match status" value="1"/>
</dbReference>
<dbReference type="NCBIfam" id="NF009044">
    <property type="entry name" value="PRK12378.1"/>
    <property type="match status" value="1"/>
</dbReference>
<dbReference type="NCBIfam" id="TIGR01033">
    <property type="entry name" value="YebC/PmpR family DNA-binding transcriptional regulator"/>
    <property type="match status" value="1"/>
</dbReference>
<dbReference type="PANTHER" id="PTHR12532">
    <property type="entry name" value="TRANSLATIONAL ACTIVATOR OF CYTOCHROME C OXIDASE 1"/>
    <property type="match status" value="1"/>
</dbReference>
<dbReference type="PANTHER" id="PTHR12532:SF0">
    <property type="entry name" value="TRANSLATIONAL ACTIVATOR OF CYTOCHROME C OXIDASE 1"/>
    <property type="match status" value="1"/>
</dbReference>
<dbReference type="Pfam" id="PF20772">
    <property type="entry name" value="TACO1_YebC_N"/>
    <property type="match status" value="1"/>
</dbReference>
<dbReference type="Pfam" id="PF01709">
    <property type="entry name" value="Transcrip_reg"/>
    <property type="match status" value="1"/>
</dbReference>
<dbReference type="SUPFAM" id="SSF75625">
    <property type="entry name" value="YebC-like"/>
    <property type="match status" value="1"/>
</dbReference>
<gene>
    <name type="ordered locus">BLi00754</name>
    <name type="ordered locus">BL02339</name>
</gene>
<comment type="subcellular location">
    <subcellularLocation>
        <location evidence="1">Cytoplasm</location>
    </subcellularLocation>
</comment>
<comment type="similarity">
    <text evidence="1">Belongs to the TACO1 family. YeeN subfamily.</text>
</comment>
<comment type="sequence caution" evidence="2">
    <conflict type="erroneous initiation">
        <sequence resource="EMBL-CDS" id="AAU39689"/>
    </conflict>
    <text>Extended N-terminus.</text>
</comment>
<protein>
    <recommendedName>
        <fullName evidence="1">Probable transcriptional regulatory protein BLi00754/BL02339</fullName>
    </recommendedName>
</protein>
<proteinExistence type="inferred from homology"/>
<evidence type="ECO:0000255" key="1">
    <source>
        <dbReference type="HAMAP-Rule" id="MF_00918"/>
    </source>
</evidence>
<evidence type="ECO:0000305" key="2"/>